<gene>
    <name evidence="1" type="primary">rplE</name>
    <name type="ordered locus">BB_0490</name>
</gene>
<feature type="chain" id="PRO_0000124897" description="Large ribosomal subunit protein uL5">
    <location>
        <begin position="1"/>
        <end position="182"/>
    </location>
</feature>
<feature type="helix" evidence="3">
    <location>
        <begin position="6"/>
        <end position="13"/>
    </location>
</feature>
<feature type="helix" evidence="3">
    <location>
        <begin position="15"/>
        <end position="23"/>
    </location>
</feature>
<feature type="helix" evidence="3">
    <location>
        <begin position="28"/>
        <end position="30"/>
    </location>
</feature>
<feature type="strand" evidence="3">
    <location>
        <begin position="34"/>
        <end position="42"/>
    </location>
</feature>
<feature type="helix" evidence="3">
    <location>
        <begin position="44"/>
        <end position="47"/>
    </location>
</feature>
<feature type="helix" evidence="3">
    <location>
        <begin position="50"/>
        <end position="64"/>
    </location>
</feature>
<feature type="strand" evidence="3">
    <location>
        <begin position="69"/>
        <end position="72"/>
    </location>
</feature>
<feature type="turn" evidence="3">
    <location>
        <begin position="78"/>
        <end position="81"/>
    </location>
</feature>
<feature type="strand" evidence="3">
    <location>
        <begin position="87"/>
        <end position="94"/>
    </location>
</feature>
<feature type="helix" evidence="3">
    <location>
        <begin position="96"/>
        <end position="109"/>
    </location>
</feature>
<feature type="turn" evidence="3">
    <location>
        <begin position="110"/>
        <end position="113"/>
    </location>
</feature>
<feature type="strand" evidence="3">
    <location>
        <begin position="127"/>
        <end position="136"/>
    </location>
</feature>
<feature type="helix" evidence="3">
    <location>
        <begin position="138"/>
        <end position="140"/>
    </location>
</feature>
<feature type="strand" evidence="3">
    <location>
        <begin position="155"/>
        <end position="162"/>
    </location>
</feature>
<feature type="helix" evidence="3">
    <location>
        <begin position="166"/>
        <end position="175"/>
    </location>
</feature>
<keyword id="KW-0002">3D-structure</keyword>
<keyword id="KW-1185">Reference proteome</keyword>
<keyword id="KW-0687">Ribonucleoprotein</keyword>
<keyword id="KW-0689">Ribosomal protein</keyword>
<keyword id="KW-0694">RNA-binding</keyword>
<keyword id="KW-0699">rRNA-binding</keyword>
<keyword id="KW-0820">tRNA-binding</keyword>
<sequence length="182" mass="20416">MNYVPELKKYYKDSVIKELVKEFEYKSIMQVPKLEKIVISVGVGEAVRNKKLLDSAVLELAQITGQKAVKTKAKKAIAGFKIRQGQEIGAKVTLRGNAMYEFLYKLIHLALPRVKDFRGINGDAFDGNGNYSFGITEQIIFSEIDYDKIERISGLNITIVTTASNDKESKALLLKFGMPFSN</sequence>
<evidence type="ECO:0000255" key="1">
    <source>
        <dbReference type="HAMAP-Rule" id="MF_01333"/>
    </source>
</evidence>
<evidence type="ECO:0000305" key="2"/>
<evidence type="ECO:0007829" key="3">
    <source>
        <dbReference type="PDB" id="8FN2"/>
    </source>
</evidence>
<name>RL5_BORBU</name>
<accession>O51443</accession>
<organism>
    <name type="scientific">Borreliella burgdorferi (strain ATCC 35210 / DSM 4680 / CIP 102532 / B31)</name>
    <name type="common">Borrelia burgdorferi</name>
    <dbReference type="NCBI Taxonomy" id="224326"/>
    <lineage>
        <taxon>Bacteria</taxon>
        <taxon>Pseudomonadati</taxon>
        <taxon>Spirochaetota</taxon>
        <taxon>Spirochaetia</taxon>
        <taxon>Spirochaetales</taxon>
        <taxon>Borreliaceae</taxon>
        <taxon>Borreliella</taxon>
    </lineage>
</organism>
<dbReference type="EMBL" id="AE000783">
    <property type="protein sequence ID" value="AAC66852.1"/>
    <property type="molecule type" value="Genomic_DNA"/>
</dbReference>
<dbReference type="PIR" id="A70161">
    <property type="entry name" value="A70161"/>
</dbReference>
<dbReference type="RefSeq" id="NP_212624.1">
    <property type="nucleotide sequence ID" value="NC_001318.1"/>
</dbReference>
<dbReference type="RefSeq" id="WP_002557081.1">
    <property type="nucleotide sequence ID" value="NC_001318.1"/>
</dbReference>
<dbReference type="PDB" id="8FMW">
    <property type="method" value="EM"/>
    <property type="resolution" value="2.86 A"/>
    <property type="chains" value="AG=1-182"/>
</dbReference>
<dbReference type="PDB" id="8FN2">
    <property type="method" value="EM"/>
    <property type="resolution" value="3.40 A"/>
    <property type="chains" value="G=1-182"/>
</dbReference>
<dbReference type="PDBsum" id="8FMW"/>
<dbReference type="PDBsum" id="8FN2"/>
<dbReference type="EMDB" id="EMD-29298"/>
<dbReference type="EMDB" id="EMD-29304"/>
<dbReference type="SMR" id="O51443"/>
<dbReference type="STRING" id="224326.BB_0490"/>
<dbReference type="PaxDb" id="224326-BB_0490"/>
<dbReference type="EnsemblBacteria" id="AAC66852">
    <property type="protein sequence ID" value="AAC66852"/>
    <property type="gene ID" value="BB_0490"/>
</dbReference>
<dbReference type="GeneID" id="56567925"/>
<dbReference type="KEGG" id="bbu:BB_0490"/>
<dbReference type="PATRIC" id="fig|224326.49.peg.881"/>
<dbReference type="HOGENOM" id="CLU_061015_2_1_12"/>
<dbReference type="OrthoDB" id="9806626at2"/>
<dbReference type="Proteomes" id="UP000001807">
    <property type="component" value="Chromosome"/>
</dbReference>
<dbReference type="GO" id="GO:1990904">
    <property type="term" value="C:ribonucleoprotein complex"/>
    <property type="evidence" value="ECO:0007669"/>
    <property type="project" value="UniProtKB-KW"/>
</dbReference>
<dbReference type="GO" id="GO:0005840">
    <property type="term" value="C:ribosome"/>
    <property type="evidence" value="ECO:0007669"/>
    <property type="project" value="UniProtKB-KW"/>
</dbReference>
<dbReference type="GO" id="GO:0019843">
    <property type="term" value="F:rRNA binding"/>
    <property type="evidence" value="ECO:0007669"/>
    <property type="project" value="UniProtKB-UniRule"/>
</dbReference>
<dbReference type="GO" id="GO:0003735">
    <property type="term" value="F:structural constituent of ribosome"/>
    <property type="evidence" value="ECO:0007669"/>
    <property type="project" value="InterPro"/>
</dbReference>
<dbReference type="GO" id="GO:0000049">
    <property type="term" value="F:tRNA binding"/>
    <property type="evidence" value="ECO:0007669"/>
    <property type="project" value="UniProtKB-UniRule"/>
</dbReference>
<dbReference type="GO" id="GO:0006412">
    <property type="term" value="P:translation"/>
    <property type="evidence" value="ECO:0007669"/>
    <property type="project" value="UniProtKB-UniRule"/>
</dbReference>
<dbReference type="FunFam" id="3.30.1440.10:FF:000001">
    <property type="entry name" value="50S ribosomal protein L5"/>
    <property type="match status" value="1"/>
</dbReference>
<dbReference type="Gene3D" id="3.30.1440.10">
    <property type="match status" value="1"/>
</dbReference>
<dbReference type="HAMAP" id="MF_01333_B">
    <property type="entry name" value="Ribosomal_uL5_B"/>
    <property type="match status" value="1"/>
</dbReference>
<dbReference type="InterPro" id="IPR002132">
    <property type="entry name" value="Ribosomal_uL5"/>
</dbReference>
<dbReference type="InterPro" id="IPR020930">
    <property type="entry name" value="Ribosomal_uL5_bac-type"/>
</dbReference>
<dbReference type="InterPro" id="IPR031309">
    <property type="entry name" value="Ribosomal_uL5_C"/>
</dbReference>
<dbReference type="InterPro" id="IPR020929">
    <property type="entry name" value="Ribosomal_uL5_CS"/>
</dbReference>
<dbReference type="InterPro" id="IPR022803">
    <property type="entry name" value="Ribosomal_uL5_dom_sf"/>
</dbReference>
<dbReference type="InterPro" id="IPR031310">
    <property type="entry name" value="Ribosomal_uL5_N"/>
</dbReference>
<dbReference type="NCBIfam" id="NF000585">
    <property type="entry name" value="PRK00010.1"/>
    <property type="match status" value="1"/>
</dbReference>
<dbReference type="PANTHER" id="PTHR11994">
    <property type="entry name" value="60S RIBOSOMAL PROTEIN L11-RELATED"/>
    <property type="match status" value="1"/>
</dbReference>
<dbReference type="Pfam" id="PF00281">
    <property type="entry name" value="Ribosomal_L5"/>
    <property type="match status" value="1"/>
</dbReference>
<dbReference type="Pfam" id="PF00673">
    <property type="entry name" value="Ribosomal_L5_C"/>
    <property type="match status" value="1"/>
</dbReference>
<dbReference type="PIRSF" id="PIRSF002161">
    <property type="entry name" value="Ribosomal_L5"/>
    <property type="match status" value="1"/>
</dbReference>
<dbReference type="SUPFAM" id="SSF55282">
    <property type="entry name" value="RL5-like"/>
    <property type="match status" value="1"/>
</dbReference>
<dbReference type="PROSITE" id="PS00358">
    <property type="entry name" value="RIBOSOMAL_L5"/>
    <property type="match status" value="1"/>
</dbReference>
<comment type="function">
    <text evidence="1">This is one of the proteins that bind and probably mediate the attachment of the 5S RNA into the large ribosomal subunit, where it forms part of the central protuberance. In the 70S ribosome it contacts protein S13 of the 30S subunit (bridge B1b), connecting the 2 subunits; this bridge is implicated in subunit movement. Contacts the P site tRNA; the 5S rRNA and some of its associated proteins might help stabilize positioning of ribosome-bound tRNAs.</text>
</comment>
<comment type="subunit">
    <text evidence="1">Part of the 50S ribosomal subunit; part of the 5S rRNA/L5/L18/L25 subcomplex. Contacts the 5S rRNA and the P site tRNA. Forms a bridge to the 30S subunit in the 70S ribosome.</text>
</comment>
<comment type="similarity">
    <text evidence="1">Belongs to the universal ribosomal protein uL5 family.</text>
</comment>
<protein>
    <recommendedName>
        <fullName evidence="1">Large ribosomal subunit protein uL5</fullName>
    </recommendedName>
    <alternativeName>
        <fullName evidence="2">50S ribosomal protein L5</fullName>
    </alternativeName>
</protein>
<reference key="1">
    <citation type="journal article" date="1997" name="Nature">
        <title>Genomic sequence of a Lyme disease spirochaete, Borrelia burgdorferi.</title>
        <authorList>
            <person name="Fraser C.M."/>
            <person name="Casjens S."/>
            <person name="Huang W.M."/>
            <person name="Sutton G.G."/>
            <person name="Clayton R.A."/>
            <person name="Lathigra R."/>
            <person name="White O."/>
            <person name="Ketchum K.A."/>
            <person name="Dodson R.J."/>
            <person name="Hickey E.K."/>
            <person name="Gwinn M.L."/>
            <person name="Dougherty B.A."/>
            <person name="Tomb J.-F."/>
            <person name="Fleischmann R.D."/>
            <person name="Richardson D.L."/>
            <person name="Peterson J.D."/>
            <person name="Kerlavage A.R."/>
            <person name="Quackenbush J."/>
            <person name="Salzberg S.L."/>
            <person name="Hanson M."/>
            <person name="van Vugt R."/>
            <person name="Palmer N."/>
            <person name="Adams M.D."/>
            <person name="Gocayne J.D."/>
            <person name="Weidman J.F."/>
            <person name="Utterback T.R."/>
            <person name="Watthey L."/>
            <person name="McDonald L.A."/>
            <person name="Artiach P."/>
            <person name="Bowman C."/>
            <person name="Garland S.A."/>
            <person name="Fujii C."/>
            <person name="Cotton M.D."/>
            <person name="Horst K."/>
            <person name="Roberts K.M."/>
            <person name="Hatch B."/>
            <person name="Smith H.O."/>
            <person name="Venter J.C."/>
        </authorList>
    </citation>
    <scope>NUCLEOTIDE SEQUENCE [LARGE SCALE GENOMIC DNA]</scope>
    <source>
        <strain>ATCC 35210 / DSM 4680 / CIP 102532 / B31</strain>
    </source>
</reference>
<proteinExistence type="evidence at protein level"/>